<name>NTDP_STRPF</name>
<evidence type="ECO:0000255" key="1">
    <source>
        <dbReference type="HAMAP-Rule" id="MF_01568"/>
    </source>
</evidence>
<reference key="1">
    <citation type="journal article" date="2006" name="Proc. Natl. Acad. Sci. U.S.A.">
        <title>Molecular genetic anatomy of inter- and intraserotype variation in the human bacterial pathogen group A Streptococcus.</title>
        <authorList>
            <person name="Beres S.B."/>
            <person name="Richter E.W."/>
            <person name="Nagiec M.J."/>
            <person name="Sumby P."/>
            <person name="Porcella S.F."/>
            <person name="DeLeo F.R."/>
            <person name="Musser J.M."/>
        </authorList>
    </citation>
    <scope>NUCLEOTIDE SEQUENCE [LARGE SCALE GENOMIC DNA]</scope>
    <source>
        <strain>MGAS10750</strain>
    </source>
</reference>
<keyword id="KW-0378">Hydrolase</keyword>
<keyword id="KW-0460">Magnesium</keyword>
<keyword id="KW-0479">Metal-binding</keyword>
<feature type="chain" id="PRO_0000248128" description="Nucleoside triphosphate/diphosphate phosphatase">
    <location>
        <begin position="1"/>
        <end position="177"/>
    </location>
</feature>
<feature type="active site" description="Proton donor" evidence="1">
    <location>
        <position position="23"/>
    </location>
</feature>
<feature type="binding site" evidence="1">
    <location>
        <position position="87"/>
    </location>
    <ligand>
        <name>Mg(2+)</name>
        <dbReference type="ChEBI" id="CHEBI:18420"/>
        <label>1</label>
    </ligand>
</feature>
<feature type="binding site" evidence="1">
    <location>
        <position position="103"/>
    </location>
    <ligand>
        <name>Mg(2+)</name>
        <dbReference type="ChEBI" id="CHEBI:18420"/>
        <label>1</label>
    </ligand>
</feature>
<feature type="binding site" evidence="1">
    <location>
        <position position="105"/>
    </location>
    <ligand>
        <name>Mg(2+)</name>
        <dbReference type="ChEBI" id="CHEBI:18420"/>
        <label>2</label>
    </ligand>
</feature>
<feature type="binding site" evidence="1">
    <location>
        <position position="107"/>
    </location>
    <ligand>
        <name>Mg(2+)</name>
        <dbReference type="ChEBI" id="CHEBI:18420"/>
        <label>1</label>
    </ligand>
</feature>
<feature type="binding site" evidence="1">
    <location>
        <position position="107"/>
    </location>
    <ligand>
        <name>Mg(2+)</name>
        <dbReference type="ChEBI" id="CHEBI:18420"/>
        <label>2</label>
    </ligand>
</feature>
<feature type="binding site" evidence="1">
    <location>
        <position position="120"/>
    </location>
    <ligand>
        <name>Mg(2+)</name>
        <dbReference type="ChEBI" id="CHEBI:18420"/>
        <label>2</label>
    </ligand>
</feature>
<feature type="binding site" evidence="1">
    <location>
        <position position="123"/>
    </location>
    <ligand>
        <name>Mg(2+)</name>
        <dbReference type="ChEBI" id="CHEBI:18420"/>
        <label>2</label>
    </ligand>
</feature>
<protein>
    <recommendedName>
        <fullName evidence="1">Nucleoside triphosphate/diphosphate phosphatase</fullName>
        <ecNumber evidence="1">3.6.1.15</ecNumber>
        <ecNumber evidence="1">3.6.1.6</ecNumber>
    </recommendedName>
</protein>
<accession>Q1J5K6</accession>
<proteinExistence type="inferred from homology"/>
<sequence length="177" mass="21178">MKLPKEGDFITIQSYKHDGSLHRTWRDTMVLKTTENALIGVNDHTLVTESDGRRWVTREPAIVYFHKKYWFNIIAMIRDNGVSYYCNLASPYMMDTEALKYIDYDLDVKVFADGEKRLLDVDEYEIHKKEMQYSADMDFILKENVKILVDWINHEKGPFSKAYITIWYKRYLELKNR</sequence>
<comment type="function">
    <text evidence="1">Has nucleoside phosphatase activity towards nucleoside triphosphates and nucleoside diphosphates.</text>
</comment>
<comment type="catalytic activity">
    <reaction evidence="1">
        <text>a ribonucleoside 5'-triphosphate + H2O = a ribonucleoside 5'-diphosphate + phosphate + H(+)</text>
        <dbReference type="Rhea" id="RHEA:23680"/>
        <dbReference type="ChEBI" id="CHEBI:15377"/>
        <dbReference type="ChEBI" id="CHEBI:15378"/>
        <dbReference type="ChEBI" id="CHEBI:43474"/>
        <dbReference type="ChEBI" id="CHEBI:57930"/>
        <dbReference type="ChEBI" id="CHEBI:61557"/>
        <dbReference type="EC" id="3.6.1.15"/>
    </reaction>
</comment>
<comment type="catalytic activity">
    <reaction evidence="1">
        <text>a ribonucleoside 5'-diphosphate + H2O = a ribonucleoside 5'-phosphate + phosphate + H(+)</text>
        <dbReference type="Rhea" id="RHEA:36799"/>
        <dbReference type="ChEBI" id="CHEBI:15377"/>
        <dbReference type="ChEBI" id="CHEBI:15378"/>
        <dbReference type="ChEBI" id="CHEBI:43474"/>
        <dbReference type="ChEBI" id="CHEBI:57930"/>
        <dbReference type="ChEBI" id="CHEBI:58043"/>
        <dbReference type="EC" id="3.6.1.6"/>
    </reaction>
</comment>
<comment type="cofactor">
    <cofactor evidence="1">
        <name>Mg(2+)</name>
        <dbReference type="ChEBI" id="CHEBI:18420"/>
    </cofactor>
</comment>
<comment type="similarity">
    <text evidence="1">Belongs to the Ntdp family.</text>
</comment>
<gene>
    <name type="ordered locus">MGAS10750_Spy1430</name>
</gene>
<organism>
    <name type="scientific">Streptococcus pyogenes serotype M4 (strain MGAS10750)</name>
    <dbReference type="NCBI Taxonomy" id="370554"/>
    <lineage>
        <taxon>Bacteria</taxon>
        <taxon>Bacillati</taxon>
        <taxon>Bacillota</taxon>
        <taxon>Bacilli</taxon>
        <taxon>Lactobacillales</taxon>
        <taxon>Streptococcaceae</taxon>
        <taxon>Streptococcus</taxon>
    </lineage>
</organism>
<dbReference type="EC" id="3.6.1.15" evidence="1"/>
<dbReference type="EC" id="3.6.1.6" evidence="1"/>
<dbReference type="EMBL" id="CP000262">
    <property type="protein sequence ID" value="ABF38380.1"/>
    <property type="molecule type" value="Genomic_DNA"/>
</dbReference>
<dbReference type="SMR" id="Q1J5K6"/>
<dbReference type="KEGG" id="spi:MGAS10750_Spy1430"/>
<dbReference type="HOGENOM" id="CLU_109787_1_0_9"/>
<dbReference type="Proteomes" id="UP000002434">
    <property type="component" value="Chromosome"/>
</dbReference>
<dbReference type="GO" id="GO:0000287">
    <property type="term" value="F:magnesium ion binding"/>
    <property type="evidence" value="ECO:0007669"/>
    <property type="project" value="UniProtKB-UniRule"/>
</dbReference>
<dbReference type="GO" id="GO:0017110">
    <property type="term" value="F:nucleoside diphosphate phosphatase activity"/>
    <property type="evidence" value="ECO:0007669"/>
    <property type="project" value="UniProtKB-UniRule"/>
</dbReference>
<dbReference type="GO" id="GO:0017111">
    <property type="term" value="F:ribonucleoside triphosphate phosphatase activity"/>
    <property type="evidence" value="ECO:0007669"/>
    <property type="project" value="UniProtKB-UniRule"/>
</dbReference>
<dbReference type="Gene3D" id="2.40.380.10">
    <property type="entry name" value="FomD-like"/>
    <property type="match status" value="1"/>
</dbReference>
<dbReference type="HAMAP" id="MF_01568">
    <property type="entry name" value="Ntdp"/>
    <property type="match status" value="1"/>
</dbReference>
<dbReference type="InterPro" id="IPR007295">
    <property type="entry name" value="DUF402"/>
</dbReference>
<dbReference type="InterPro" id="IPR035930">
    <property type="entry name" value="FomD-like_sf"/>
</dbReference>
<dbReference type="InterPro" id="IPR050212">
    <property type="entry name" value="Ntdp-like"/>
</dbReference>
<dbReference type="InterPro" id="IPR016882">
    <property type="entry name" value="SA1684"/>
</dbReference>
<dbReference type="NCBIfam" id="NF010183">
    <property type="entry name" value="PRK13662.1"/>
    <property type="match status" value="1"/>
</dbReference>
<dbReference type="PANTHER" id="PTHR39159">
    <property type="match status" value="1"/>
</dbReference>
<dbReference type="PANTHER" id="PTHR39159:SF1">
    <property type="entry name" value="UPF0374 PROTEIN YGAC"/>
    <property type="match status" value="1"/>
</dbReference>
<dbReference type="Pfam" id="PF04167">
    <property type="entry name" value="DUF402"/>
    <property type="match status" value="1"/>
</dbReference>
<dbReference type="PIRSF" id="PIRSF028345">
    <property type="entry name" value="UCP028345"/>
    <property type="match status" value="1"/>
</dbReference>
<dbReference type="SUPFAM" id="SSF159234">
    <property type="entry name" value="FomD-like"/>
    <property type="match status" value="1"/>
</dbReference>